<evidence type="ECO:0000250" key="1">
    <source>
        <dbReference type="UniProtKB" id="P62482"/>
    </source>
</evidence>
<evidence type="ECO:0000250" key="2">
    <source>
        <dbReference type="UniProtKB" id="Q13303"/>
    </source>
</evidence>
<evidence type="ECO:0000269" key="3">
    <source>
    </source>
</evidence>
<evidence type="ECO:0000269" key="4">
    <source>
    </source>
</evidence>
<evidence type="ECO:0000269" key="5">
    <source>
    </source>
</evidence>
<evidence type="ECO:0000269" key="6">
    <source>
    </source>
</evidence>
<evidence type="ECO:0000269" key="7">
    <source>
    </source>
</evidence>
<evidence type="ECO:0000269" key="8">
    <source>
    </source>
</evidence>
<evidence type="ECO:0000269" key="9">
    <source>
    </source>
</evidence>
<evidence type="ECO:0000269" key="10">
    <source>
    </source>
</evidence>
<evidence type="ECO:0000269" key="11">
    <source>
    </source>
</evidence>
<evidence type="ECO:0000269" key="12">
    <source>
    </source>
</evidence>
<evidence type="ECO:0000269" key="13">
    <source>
    </source>
</evidence>
<evidence type="ECO:0000269" key="14">
    <source>
    </source>
</evidence>
<evidence type="ECO:0000269" key="15">
    <source>
    </source>
</evidence>
<evidence type="ECO:0000269" key="16">
    <source>
    </source>
</evidence>
<evidence type="ECO:0000269" key="17">
    <source>
    </source>
</evidence>
<evidence type="ECO:0000269" key="18">
    <source>
    </source>
</evidence>
<evidence type="ECO:0000269" key="19">
    <source>
    </source>
</evidence>
<evidence type="ECO:0000269" key="20">
    <source>
    </source>
</evidence>
<evidence type="ECO:0000269" key="21">
    <source>
    </source>
</evidence>
<evidence type="ECO:0000305" key="22"/>
<evidence type="ECO:0000305" key="23">
    <source>
    </source>
</evidence>
<evidence type="ECO:0000312" key="24">
    <source>
        <dbReference type="PDB" id="7SIZ"/>
    </source>
</evidence>
<evidence type="ECO:0007744" key="25">
    <source>
        <dbReference type="PDB" id="1EXB"/>
    </source>
</evidence>
<evidence type="ECO:0007744" key="26">
    <source>
        <dbReference type="PDB" id="1QRQ"/>
    </source>
</evidence>
<evidence type="ECO:0007744" key="27">
    <source>
        <dbReference type="PDB" id="2A79"/>
    </source>
</evidence>
<evidence type="ECO:0007744" key="28">
    <source>
        <dbReference type="PDB" id="2R9R"/>
    </source>
</evidence>
<evidence type="ECO:0007744" key="29">
    <source>
        <dbReference type="PDB" id="3EAU"/>
    </source>
</evidence>
<evidence type="ECO:0007744" key="30">
    <source>
        <dbReference type="PDB" id="3EB3"/>
    </source>
</evidence>
<evidence type="ECO:0007744" key="31">
    <source>
        <dbReference type="PDB" id="3EB4"/>
    </source>
</evidence>
<evidence type="ECO:0007744" key="32">
    <source>
        <dbReference type="PDB" id="3LNM"/>
    </source>
</evidence>
<evidence type="ECO:0007744" key="33">
    <source>
        <dbReference type="PDB" id="3LUT"/>
    </source>
</evidence>
<evidence type="ECO:0007744" key="34">
    <source>
        <dbReference type="PDB" id="4JTA"/>
    </source>
</evidence>
<evidence type="ECO:0007744" key="35">
    <source>
        <dbReference type="PDB" id="4JTC"/>
    </source>
</evidence>
<evidence type="ECO:0007744" key="36">
    <source>
        <dbReference type="PDB" id="4JTD"/>
    </source>
</evidence>
<evidence type="ECO:0007744" key="37">
    <source>
    </source>
</evidence>
<evidence type="ECO:0007829" key="38">
    <source>
        <dbReference type="PDB" id="3EAU"/>
    </source>
</evidence>
<proteinExistence type="evidence at protein level"/>
<sequence>MYPESTTGSPARLSLRQTGSPGMIYSTRYGSPKRQLQFYRNLGKSGLRVSCLGLGTWVTFGGQITDEMAEHLMTLAYDNGINLFDTAEVYAAGKAEVVLGNIIKKKGWRRSSLVITTKIFWGGKAETERGLSRKHIIEGLKASLERLQLEYVDVVFANRPDPNTPMEETVRAMTHVINQGMAMYWGTSRWSSMEIMEAYSVARQFNLIPPICEQAEYHMFQREKVEVQLPELFHKIGVGAMTWSPLACGIVSGKYDSGIPPYSRASLKGYQWLKDKILSEEGRRQQAKLKELQAIAERLGCTLPQLAIAWCLRNEGVSSVLLGASNAEQLMENIGAIQVLPKLSSSIVHEIDSILGNKPYSKKDYRS</sequence>
<dbReference type="EC" id="1.1.1.-" evidence="12 16"/>
<dbReference type="EMBL" id="X76724">
    <property type="protein sequence ID" value="CAA54142.1"/>
    <property type="molecule type" value="mRNA"/>
</dbReference>
<dbReference type="PIR" id="S45312">
    <property type="entry name" value="S45312"/>
</dbReference>
<dbReference type="RefSeq" id="NP_001416675.1">
    <property type="nucleotide sequence ID" value="NM_001429746.1"/>
</dbReference>
<dbReference type="RefSeq" id="NP_059000.1">
    <property type="nucleotide sequence ID" value="NM_017304.3"/>
</dbReference>
<dbReference type="PDB" id="1EXB">
    <property type="method" value="X-ray"/>
    <property type="resolution" value="2.10 A"/>
    <property type="chains" value="A=36-367"/>
</dbReference>
<dbReference type="PDB" id="1QRQ">
    <property type="method" value="X-ray"/>
    <property type="resolution" value="2.80 A"/>
    <property type="chains" value="A/B/C/D=36-360"/>
</dbReference>
<dbReference type="PDB" id="2A79">
    <property type="method" value="X-ray"/>
    <property type="resolution" value="2.90 A"/>
    <property type="chains" value="A=36-367"/>
</dbReference>
<dbReference type="PDB" id="2R9R">
    <property type="method" value="X-ray"/>
    <property type="resolution" value="2.40 A"/>
    <property type="chains" value="A/G=36-367"/>
</dbReference>
<dbReference type="PDB" id="3EAU">
    <property type="method" value="X-ray"/>
    <property type="resolution" value="1.82 A"/>
    <property type="chains" value="A=36-361"/>
</dbReference>
<dbReference type="PDB" id="3EB3">
    <property type="method" value="X-ray"/>
    <property type="resolution" value="2.00 A"/>
    <property type="chains" value="A=36-361"/>
</dbReference>
<dbReference type="PDB" id="3EB4">
    <property type="method" value="X-ray"/>
    <property type="resolution" value="2.00 A"/>
    <property type="chains" value="A=36-361"/>
</dbReference>
<dbReference type="PDB" id="3LNM">
    <property type="method" value="X-ray"/>
    <property type="resolution" value="2.90 A"/>
    <property type="chains" value="A/C=36-367"/>
</dbReference>
<dbReference type="PDB" id="3LUT">
    <property type="method" value="X-ray"/>
    <property type="resolution" value="2.90 A"/>
    <property type="chains" value="A=1-367"/>
</dbReference>
<dbReference type="PDB" id="4JTA">
    <property type="method" value="X-ray"/>
    <property type="resolution" value="2.50 A"/>
    <property type="chains" value="A/P=36-367"/>
</dbReference>
<dbReference type="PDB" id="4JTC">
    <property type="method" value="X-ray"/>
    <property type="resolution" value="2.56 A"/>
    <property type="chains" value="A/G=36-367"/>
</dbReference>
<dbReference type="PDB" id="4JTD">
    <property type="method" value="X-ray"/>
    <property type="resolution" value="2.54 A"/>
    <property type="chains" value="A/G=36-367"/>
</dbReference>
<dbReference type="PDB" id="5WIE">
    <property type="method" value="X-ray"/>
    <property type="resolution" value="3.30 A"/>
    <property type="chains" value="A/G=35-367"/>
</dbReference>
<dbReference type="PDB" id="6CI1">
    <property type="method" value="EM"/>
    <property type="resolution" value="4.90 A"/>
    <property type="chains" value="A/B/C/D/E/F/G/H=36-361"/>
</dbReference>
<dbReference type="PDB" id="6EBK">
    <property type="method" value="EM"/>
    <property type="resolution" value="3.30 A"/>
    <property type="chains" value="A/C/E/G=37-367"/>
</dbReference>
<dbReference type="PDB" id="6EBL">
    <property type="method" value="EM"/>
    <property type="resolution" value="3.00 A"/>
    <property type="chains" value="A/C/E/G=37-367"/>
</dbReference>
<dbReference type="PDB" id="7SIT">
    <property type="method" value="X-ray"/>
    <property type="resolution" value="3.32 A"/>
    <property type="chains" value="A/C=35-367"/>
</dbReference>
<dbReference type="PDB" id="7SIZ">
    <property type="method" value="X-ray"/>
    <property type="resolution" value="3.10 A"/>
    <property type="chains" value="A/C=35-367"/>
</dbReference>
<dbReference type="PDBsum" id="1EXB"/>
<dbReference type="PDBsum" id="1QRQ"/>
<dbReference type="PDBsum" id="2A79"/>
<dbReference type="PDBsum" id="2R9R"/>
<dbReference type="PDBsum" id="3EAU"/>
<dbReference type="PDBsum" id="3EB3"/>
<dbReference type="PDBsum" id="3EB4"/>
<dbReference type="PDBsum" id="3LNM"/>
<dbReference type="PDBsum" id="3LUT"/>
<dbReference type="PDBsum" id="4JTA"/>
<dbReference type="PDBsum" id="4JTC"/>
<dbReference type="PDBsum" id="4JTD"/>
<dbReference type="PDBsum" id="5WIE"/>
<dbReference type="PDBsum" id="6CI1"/>
<dbReference type="PDBsum" id="6EBK"/>
<dbReference type="PDBsum" id="6EBL"/>
<dbReference type="PDBsum" id="7SIT"/>
<dbReference type="PDBsum" id="7SIZ"/>
<dbReference type="EMDB" id="EMD-7305"/>
<dbReference type="EMDB" id="EMD-9024"/>
<dbReference type="EMDB" id="EMD-9025"/>
<dbReference type="SMR" id="P62483"/>
<dbReference type="BioGRID" id="248350">
    <property type="interactions" value="7"/>
</dbReference>
<dbReference type="CORUM" id="P62483"/>
<dbReference type="FunCoup" id="P62483">
    <property type="interactions" value="580"/>
</dbReference>
<dbReference type="IntAct" id="P62483">
    <property type="interactions" value="2"/>
</dbReference>
<dbReference type="MINT" id="P62483"/>
<dbReference type="STRING" id="10116.ENSRNOP00000073699"/>
<dbReference type="iPTMnet" id="P62483"/>
<dbReference type="PhosphoSitePlus" id="P62483"/>
<dbReference type="PaxDb" id="10116-ENSRNOP00000015840"/>
<dbReference type="ABCD" id="P62483">
    <property type="antibodies" value="3 sequenced antibodies"/>
</dbReference>
<dbReference type="GeneID" id="29738"/>
<dbReference type="KEGG" id="rno:29738"/>
<dbReference type="UCSC" id="RGD:61828">
    <property type="organism name" value="rat"/>
</dbReference>
<dbReference type="AGR" id="RGD:61828"/>
<dbReference type="CTD" id="8514"/>
<dbReference type="RGD" id="61828">
    <property type="gene designation" value="Kcnab2"/>
</dbReference>
<dbReference type="VEuPathDB" id="HostDB:ENSRNOG00000011550"/>
<dbReference type="eggNOG" id="KOG1575">
    <property type="taxonomic scope" value="Eukaryota"/>
</dbReference>
<dbReference type="InParanoid" id="P62483"/>
<dbReference type="PhylomeDB" id="P62483"/>
<dbReference type="TreeFam" id="TF324563"/>
<dbReference type="Reactome" id="R-RNO-1296072">
    <property type="pathway name" value="Voltage gated Potassium channels"/>
</dbReference>
<dbReference type="Reactome" id="R-RNO-6798695">
    <property type="pathway name" value="Neutrophil degranulation"/>
</dbReference>
<dbReference type="EvolutionaryTrace" id="P62483"/>
<dbReference type="PRO" id="PR:P62483"/>
<dbReference type="Proteomes" id="UP000002494">
    <property type="component" value="Chromosome 5"/>
</dbReference>
<dbReference type="Bgee" id="ENSRNOG00000011550">
    <property type="expression patterns" value="Expressed in frontal cortex and 20 other cell types or tissues"/>
</dbReference>
<dbReference type="ExpressionAtlas" id="P62483">
    <property type="expression patterns" value="baseline and differential"/>
</dbReference>
<dbReference type="GO" id="GO:0030424">
    <property type="term" value="C:axon"/>
    <property type="evidence" value="ECO:0000314"/>
    <property type="project" value="UniProtKB"/>
</dbReference>
<dbReference type="GO" id="GO:0043194">
    <property type="term" value="C:axon initial segment"/>
    <property type="evidence" value="ECO:0000266"/>
    <property type="project" value="RGD"/>
</dbReference>
<dbReference type="GO" id="GO:0043679">
    <property type="term" value="C:axon terminus"/>
    <property type="evidence" value="ECO:0000266"/>
    <property type="project" value="RGD"/>
</dbReference>
<dbReference type="GO" id="GO:0009898">
    <property type="term" value="C:cytoplasmic side of plasma membrane"/>
    <property type="evidence" value="ECO:0000314"/>
    <property type="project" value="UniProtKB"/>
</dbReference>
<dbReference type="GO" id="GO:0005856">
    <property type="term" value="C:cytoskeleton"/>
    <property type="evidence" value="ECO:0007669"/>
    <property type="project" value="UniProtKB-SubCell"/>
</dbReference>
<dbReference type="GO" id="GO:0005829">
    <property type="term" value="C:cytosol"/>
    <property type="evidence" value="ECO:0000314"/>
    <property type="project" value="UniProtKB"/>
</dbReference>
<dbReference type="GO" id="GO:0098978">
    <property type="term" value="C:glutamatergic synapse"/>
    <property type="evidence" value="ECO:0000314"/>
    <property type="project" value="SynGO"/>
</dbReference>
<dbReference type="GO" id="GO:0044224">
    <property type="term" value="C:juxtaparanode region of axon"/>
    <property type="evidence" value="ECO:0000314"/>
    <property type="project" value="UniProtKB"/>
</dbReference>
<dbReference type="GO" id="GO:0016020">
    <property type="term" value="C:membrane"/>
    <property type="evidence" value="ECO:0000266"/>
    <property type="project" value="RGD"/>
</dbReference>
<dbReference type="GO" id="GO:0043005">
    <property type="term" value="C:neuron projection"/>
    <property type="evidence" value="ECO:0000314"/>
    <property type="project" value="UniProtKB"/>
</dbReference>
<dbReference type="GO" id="GO:1990031">
    <property type="term" value="C:pinceau fiber"/>
    <property type="evidence" value="ECO:0000314"/>
    <property type="project" value="UniProtKB"/>
</dbReference>
<dbReference type="GO" id="GO:0014069">
    <property type="term" value="C:postsynaptic density"/>
    <property type="evidence" value="ECO:0000266"/>
    <property type="project" value="RGD"/>
</dbReference>
<dbReference type="GO" id="GO:0098839">
    <property type="term" value="C:postsynaptic density membrane"/>
    <property type="evidence" value="ECO:0000314"/>
    <property type="project" value="SynGO"/>
</dbReference>
<dbReference type="GO" id="GO:0034705">
    <property type="term" value="C:potassium channel complex"/>
    <property type="evidence" value="ECO:0000314"/>
    <property type="project" value="UniProtKB"/>
</dbReference>
<dbReference type="GO" id="GO:0008076">
    <property type="term" value="C:voltage-gated potassium channel complex"/>
    <property type="evidence" value="ECO:0000266"/>
    <property type="project" value="RGD"/>
</dbReference>
<dbReference type="GO" id="GO:0004033">
    <property type="term" value="F:aldo-keto reductase (NADPH) activity"/>
    <property type="evidence" value="ECO:0000314"/>
    <property type="project" value="UniProtKB"/>
</dbReference>
<dbReference type="GO" id="GO:1990002">
    <property type="term" value="F:methylglyoxal reductase (NADPH) (acetol producing) activity"/>
    <property type="evidence" value="ECO:0007669"/>
    <property type="project" value="RHEA"/>
</dbReference>
<dbReference type="GO" id="GO:0015459">
    <property type="term" value="F:potassium channel regulator activity"/>
    <property type="evidence" value="ECO:0000314"/>
    <property type="project" value="UniProtKB"/>
</dbReference>
<dbReference type="GO" id="GO:0044877">
    <property type="term" value="F:protein-containing complex binding"/>
    <property type="evidence" value="ECO:0000353"/>
    <property type="project" value="RGD"/>
</dbReference>
<dbReference type="GO" id="GO:0044325">
    <property type="term" value="F:transmembrane transporter binding"/>
    <property type="evidence" value="ECO:0000353"/>
    <property type="project" value="RGD"/>
</dbReference>
<dbReference type="GO" id="GO:0005249">
    <property type="term" value="F:voltage-gated potassium channel activity"/>
    <property type="evidence" value="ECO:0007669"/>
    <property type="project" value="InterPro"/>
</dbReference>
<dbReference type="GO" id="GO:0002244">
    <property type="term" value="P:hematopoietic progenitor cell differentiation"/>
    <property type="evidence" value="ECO:0000266"/>
    <property type="project" value="RGD"/>
</dbReference>
<dbReference type="GO" id="GO:0045445">
    <property type="term" value="P:myoblast differentiation"/>
    <property type="evidence" value="ECO:0000270"/>
    <property type="project" value="RGD"/>
</dbReference>
<dbReference type="GO" id="GO:0050905">
    <property type="term" value="P:neuromuscular process"/>
    <property type="evidence" value="ECO:0000266"/>
    <property type="project" value="RGD"/>
</dbReference>
<dbReference type="GO" id="GO:1901379">
    <property type="term" value="P:regulation of potassium ion transmembrane transport"/>
    <property type="evidence" value="ECO:0000314"/>
    <property type="project" value="UniProtKB"/>
</dbReference>
<dbReference type="GO" id="GO:2000008">
    <property type="term" value="P:regulation of protein localization to cell surface"/>
    <property type="evidence" value="ECO:0000315"/>
    <property type="project" value="UniProtKB"/>
</dbReference>
<dbReference type="CDD" id="cd19141">
    <property type="entry name" value="Aldo_ket_red_shaker"/>
    <property type="match status" value="1"/>
</dbReference>
<dbReference type="FunFam" id="3.20.20.100:FF:000001">
    <property type="entry name" value="voltage-gated potassium channel subunit beta-2 isoform X2"/>
    <property type="match status" value="1"/>
</dbReference>
<dbReference type="Gene3D" id="3.20.20.100">
    <property type="entry name" value="NADP-dependent oxidoreductase domain"/>
    <property type="match status" value="1"/>
</dbReference>
<dbReference type="InterPro" id="IPR005983">
    <property type="entry name" value="K_chnl_volt-dep_bsu_KCNAB"/>
</dbReference>
<dbReference type="InterPro" id="IPR005399">
    <property type="entry name" value="K_chnl_volt-dep_bsu_KCNAB-rel"/>
</dbReference>
<dbReference type="InterPro" id="IPR005401">
    <property type="entry name" value="K_chnl_volt-dep_bsu_KCNAB2"/>
</dbReference>
<dbReference type="InterPro" id="IPR023210">
    <property type="entry name" value="NADP_OxRdtase_dom"/>
</dbReference>
<dbReference type="InterPro" id="IPR036812">
    <property type="entry name" value="NADP_OxRdtase_dom_sf"/>
</dbReference>
<dbReference type="NCBIfam" id="TIGR01293">
    <property type="entry name" value="Kv_beta"/>
    <property type="match status" value="1"/>
</dbReference>
<dbReference type="PANTHER" id="PTHR43150">
    <property type="entry name" value="HYPERKINETIC, ISOFORM M"/>
    <property type="match status" value="1"/>
</dbReference>
<dbReference type="PANTHER" id="PTHR43150:SF1">
    <property type="entry name" value="VOLTAGE-GATED POTASSIUM CHANNEL SUBUNIT BETA-2"/>
    <property type="match status" value="1"/>
</dbReference>
<dbReference type="Pfam" id="PF00248">
    <property type="entry name" value="Aldo_ket_red"/>
    <property type="match status" value="1"/>
</dbReference>
<dbReference type="PRINTS" id="PR01579">
    <property type="entry name" value="KCNAB2CHANEL"/>
</dbReference>
<dbReference type="PRINTS" id="PR01577">
    <property type="entry name" value="KCNABCHANNEL"/>
</dbReference>
<dbReference type="SUPFAM" id="SSF51430">
    <property type="entry name" value="NAD(P)-linked oxidoreductase"/>
    <property type="match status" value="1"/>
</dbReference>
<keyword id="KW-0002">3D-structure</keyword>
<keyword id="KW-0007">Acetylation</keyword>
<keyword id="KW-1003">Cell membrane</keyword>
<keyword id="KW-0966">Cell projection</keyword>
<keyword id="KW-0963">Cytoplasm</keyword>
<keyword id="KW-0206">Cytoskeleton</keyword>
<keyword id="KW-0406">Ion transport</keyword>
<keyword id="KW-0472">Membrane</keyword>
<keyword id="KW-0488">Methylation</keyword>
<keyword id="KW-0521">NADP</keyword>
<keyword id="KW-0560">Oxidoreductase</keyword>
<keyword id="KW-0597">Phosphoprotein</keyword>
<keyword id="KW-0630">Potassium</keyword>
<keyword id="KW-0633">Potassium transport</keyword>
<keyword id="KW-1185">Reference proteome</keyword>
<keyword id="KW-0770">Synapse</keyword>
<keyword id="KW-0771">Synaptosome</keyword>
<keyword id="KW-0813">Transport</keyword>
<comment type="function">
    <text evidence="1 6 10 12 16 17 21">Regulatory subunit of the voltage-gated potassium (Kv) Shaker channels composed of pore-forming and potassium-conducting alpha subunits and of regulatory beta subunits (PubMed:10896669, PubMed:18003609, PubMed:21357749, PubMed:9763623). The beta-2/KCNAB2 subunit promotes potassium channel closure via a mechanism that does not involve physical obstruction of the channel pore (PubMed:21357749). Promotes the inactivation of Kv1.4/KCNA4 and Kv1.5/KCNA5 alpha subunit-containing channels (PubMed:9763623). Displays nicotinamide adenine dinucleotide phosphate (NADPH)-dependent aldoketoreductase activity by catalyzing the NADPH-dependent reduction of a wide range of aldehyde and ketone substrates (PubMed:18672894, PubMed:21209188). Substrate specificity includes methylglyoxal, 9,10-phenanthrenequinone, prostaglandin J2, 4-nitrobenzaldehyde, 4-nitroacetophenone and 4-oxo-trans-2-nonenal (in vitro, no physiological substrate identified yet) (PubMed:18672894). The binding of oxidized and reduced nucleotide alters Kv channel gating and may contribute to dynamic fine tuning of cell excitability (PubMed:18672894). Contributes to the regulation of nerve signaling, and prevents neuronal hyperexcitability (By similarity).</text>
</comment>
<comment type="catalytic activity">
    <reaction evidence="12">
        <text>hydroxyacetone + NADP(+) = methylglyoxal + NADPH + H(+)</text>
        <dbReference type="Rhea" id="RHEA:27986"/>
        <dbReference type="ChEBI" id="CHEBI:15378"/>
        <dbReference type="ChEBI" id="CHEBI:17158"/>
        <dbReference type="ChEBI" id="CHEBI:27957"/>
        <dbReference type="ChEBI" id="CHEBI:57783"/>
        <dbReference type="ChEBI" id="CHEBI:58349"/>
    </reaction>
    <physiologicalReaction direction="right-to-left" evidence="23">
        <dbReference type="Rhea" id="RHEA:27988"/>
    </physiologicalReaction>
</comment>
<comment type="catalytic activity">
    <reaction evidence="12">
        <text>(E)-4-oxonon-2-en-1-ol + NADP(+) = (E)-4-oxonon-2-enal + NADPH + H(+)</text>
        <dbReference type="Rhea" id="RHEA:58432"/>
        <dbReference type="ChEBI" id="CHEBI:15378"/>
        <dbReference type="ChEBI" id="CHEBI:57783"/>
        <dbReference type="ChEBI" id="CHEBI:58349"/>
        <dbReference type="ChEBI" id="CHEBI:58972"/>
        <dbReference type="ChEBI" id="CHEBI:142624"/>
    </reaction>
    <physiologicalReaction direction="right-to-left" evidence="23">
        <dbReference type="Rhea" id="RHEA:58434"/>
    </physiologicalReaction>
</comment>
<comment type="biophysicochemical properties">
    <kinetics>
        <KM evidence="12">209 uM for 4-nitroacetophenone</KM>
        <KM evidence="12">240 uM for 9,10-phenanthroquinone</KM>
        <KM evidence="12">283 uM for 4-nitrobenzaldehyde</KM>
        <KM evidence="12">12 mM for methylglyoxal</KM>
        <text evidence="12">kcat is 0.092 min(-1) with 4-nitroacetophenone as substrate. kcat is 0.14 min(-1) with 9,10-phenanthroquinone as substrate. kcat is 0.16 min(-1) with 4-nitrobenzaldehyde as substrate. kcat is 0.32 min(-1) with methylglyoxal as substrate. kcat is 0.028 min(-1) with 4-oxonon-2-enal as substrate.</text>
    </kinetics>
    <phDependence>
        <text evidence="12">Optimum pH is 7.2-7.4 for the NADPH-dependent reduction of 4-nitrobenzaldehyde.</text>
    </phDependence>
</comment>
<comment type="subunit">
    <text evidence="3 4 5 7 9 10 11 13 14 15 17 18 19 20">Homotetramer (PubMed:10399921, PubMed:10884227, PubMed:16002581, PubMed:18004376, PubMed:18806782, PubMed:20360102, PubMed:20534430, PubMed:23705070). Interaction with tetrameric potassium channel alpha subunits gives rise to a heterooctamer (PubMed:10884227, PubMed:16002581, PubMed:18004376, PubMed:18806782, PubMed:20360102, PubMed:20534430, PubMed:23705070). Identified in potassium channel complexes containing KCNA1, KCNA2, KCNA4, KCNA5, KCNA6, KCNAB1, KCNAB2 and KCND3 (PubMed:10884227, PubMed:12860406, PubMed:16002581, PubMed:18003609, PubMed:18004376, PubMed:18806782, PubMed:20360102, PubMed:20534430, PubMed:21357749, PubMed:23318870, PubMed:23705070, PubMed:9334400). Interacts (in unphosphorylated form) with MAPRE1 (PubMed:21357749). Forms a ternary complex with SQSTM1 and PRKCZ (PubMed:10477520).</text>
</comment>
<comment type="subcellular location">
    <subcellularLocation>
        <location evidence="17">Cytoplasm</location>
    </subcellularLocation>
    <subcellularLocation>
        <location evidence="17 20">Membrane</location>
        <topology evidence="22">Peripheral membrane protein</topology>
        <orientation evidence="22">Cytoplasmic side</orientation>
    </subcellularLocation>
    <subcellularLocation>
        <location evidence="18">Cell membrane</location>
        <topology evidence="22">Peripheral membrane protein</topology>
        <orientation evidence="22">Cytoplasmic side</orientation>
    </subcellularLocation>
    <subcellularLocation>
        <location evidence="17 20">Cell projection</location>
        <location evidence="17 20">Axon</location>
    </subcellularLocation>
    <subcellularLocation>
        <location evidence="17">Synapse</location>
        <location evidence="17">Synaptosome</location>
    </subcellularLocation>
    <subcellularLocation>
        <location evidence="17">Cytoplasm</location>
        <location evidence="17">Cytoskeleton</location>
    </subcellularLocation>
    <text evidence="17 22">Recruited to the cytoplasmic side of the cell membrane via its interaction with pore-forming potassium channel alpha subunits. Associates with microtubules when unphosphorylated (PubMed:21357749).</text>
</comment>
<comment type="tissue specificity">
    <text evidence="8 17 18 20">Detected in brain (PubMed:21357749, PubMed:9334400). Detected in the middle third of the molecular layer of the dentate gyrus in hippocampus (PubMed:9334400). Detected in neurons in the deep cerebellar nucleus (PubMed:23318870). Detected in globus pallidus and pars reticulata of the substantia nigra (PubMed:9334400). Detected in cerebellum (PubMed:23318870). Detected at axon terminal plexuses of cerebellar granule cells (PubMed:9334400). Detected in the juxtaparanodal region of nodes of Ranvier in cerebellum (at protein level) (PubMed:9334400). Detected in mesenteric arteries (PubMed:15618540).</text>
</comment>
<comment type="domain">
    <text evidence="2">In contrast to KCNAB1, the shorter N-terminal domain of KCNAB2 cannot mediate closure of delayed rectifier potassium channels by physically obstructing the pore.</text>
</comment>
<comment type="PTM">
    <text evidence="4">Phosphorylated by PRKCZ; may be regulated by incorporation in a complex composed of PRKCZ and SQSTM1.</text>
</comment>
<comment type="similarity">
    <text evidence="22">Belongs to the shaker potassium channel beta subunit family.</text>
</comment>
<reference key="1">
    <citation type="journal article" date="1994" name="Nature">
        <title>Inactivation properties of voltage-gated K+ channels altered by presence of beta-subunit.</title>
        <authorList>
            <person name="Rettig J."/>
            <person name="Heinemann S.H."/>
            <person name="Wunder F."/>
            <person name="Lorra C."/>
            <person name="Parcej D.N."/>
            <person name="Dolly J.O."/>
            <person name="Pongs O."/>
        </authorList>
    </citation>
    <scope>NUCLEOTIDE SEQUENCE [MRNA]</scope>
    <source>
        <tissue>Brain cortex</tissue>
    </source>
</reference>
<reference key="2">
    <citation type="journal article" date="1997" name="J. Neurosci.">
        <title>Association and colocalization of the Kvbeta1 and Kvbeta2 beta-subunits with Kv1 alpha-subunits in mammalian brain K+ channel complexes.</title>
        <authorList>
            <person name="Rhodes K.J."/>
            <person name="Strassle B.W."/>
            <person name="Monaghan M.M."/>
            <person name="Bekele-Arcuri Z."/>
            <person name="Matos M.F."/>
            <person name="Trimmer J.S."/>
        </authorList>
    </citation>
    <scope>INTERACTION WITH KCNA1; KCNA2; KCNA4; KCNA6 AND KCNAB1</scope>
    <scope>SUBUNIT</scope>
    <scope>TISSUE SPECIFICITY</scope>
    <scope>SUBCELLULAR LOCATION</scope>
</reference>
<reference key="3">
    <citation type="journal article" date="1998" name="J. Physiol. (Lond.)">
        <title>Separable effects of human Kvbeta1.2 N- and C-termini on inactivation and expression of human Kv1.4.</title>
        <authorList>
            <person name="Accili E.A."/>
            <person name="Kuryshev Y.A."/>
            <person name="Wible B.A."/>
            <person name="Brown A.M."/>
        </authorList>
    </citation>
    <scope>FUNCTION</scope>
</reference>
<reference key="4">
    <citation type="journal article" date="1999" name="Science">
        <title>Differential stimulation of PKC phosphorylation of potassium channels by ZIP1 and ZIP2.</title>
        <authorList>
            <person name="Gong J."/>
            <person name="Xu J."/>
            <person name="Bezanilla M."/>
            <person name="van Huizen R."/>
            <person name="Derin R."/>
            <person name="Li M."/>
        </authorList>
    </citation>
    <scope>INTERACTION WITH SQSTM1 AND PRKCZ</scope>
    <scope>PHOSPHORYLATION BY PRKCZ</scope>
</reference>
<reference key="5">
    <citation type="journal article" date="2000" name="J. Biol. Chem.">
        <title>Subunit composition determines Kv1 potassium channel surface expression.</title>
        <authorList>
            <person name="Manganas L.N."/>
            <person name="Trimmer J.S."/>
        </authorList>
    </citation>
    <scope>FUNCTION</scope>
</reference>
<reference key="6">
    <citation type="journal article" date="2001" name="J. Comp. Neurol.">
        <title>Subunit composition and novel localization of K+ channels in spinal cord.</title>
        <authorList>
            <person name="Rasband M.N."/>
            <person name="Trimmer J.S."/>
        </authorList>
    </citation>
    <scope>INTERACTION WITH KCNA1 AND KCNA2</scope>
    <scope>SUBUNIT</scope>
    <scope>SUBCELLULAR LOCATION</scope>
    <scope>TISSUE SPECIFICITY</scope>
</reference>
<reference key="7">
    <citation type="journal article" date="2003" name="FEBS Lett.">
        <title>Differential association of the auxiliary subunit Kvbeta2 with Kv1.4 and Kv4.3 K+ channels.</title>
        <authorList>
            <person name="Wang L."/>
            <person name="Takimoto K."/>
            <person name="Levitan E.S."/>
        </authorList>
    </citation>
    <scope>INTERACTION WITH KCNA4 AND KCND3</scope>
</reference>
<reference key="8">
    <citation type="journal article" date="2005" name="Circ. Res.">
        <title>Heteromultimeric Kv1 channels contribute to myogenic control of arterial diameter.</title>
        <authorList>
            <person name="Plane F."/>
            <person name="Johnson R."/>
            <person name="Kerr P."/>
            <person name="Wiehler W."/>
            <person name="Thorneloe K."/>
            <person name="Ishii K."/>
            <person name="Chen T."/>
            <person name="Cole W."/>
        </authorList>
    </citation>
    <scope>FUNCTION</scope>
    <scope>SUBCELLULAR LOCATION</scope>
    <scope>SUBUNIT</scope>
    <scope>TISSUE SPECIFICITY</scope>
</reference>
<reference key="9">
    <citation type="journal article" date="2005" name="J. Biol. Chem.">
        <title>The p62 scaffold regulates nerve growth factor-induced NF-kappaB activation by influencing TRAF6 polyubiquitination.</title>
        <authorList>
            <person name="Wooten M.W."/>
            <person name="Geetha T."/>
            <person name="Seibenhener M.L."/>
            <person name="Babu J.R."/>
            <person name="Diaz-Meco M.T."/>
            <person name="Moscat J."/>
        </authorList>
    </citation>
    <scope>INTERACTION WITH SQSTM1; IKBKB AND TRAF6</scope>
</reference>
<reference key="10">
    <citation type="journal article" date="2006" name="Neurochem. Res.">
        <title>Glycosylation and cell surface expression of Kv1.2 potassium channel are regulated by determinants in the pore region.</title>
        <authorList>
            <person name="Fujita T."/>
            <person name="Utsunomiya I."/>
            <person name="Ren J."/>
            <person name="Matsushita Y."/>
            <person name="Kawai M."/>
            <person name="Sasaki S."/>
            <person name="Hoshi K."/>
            <person name="Miyatake T."/>
            <person name="Taguchi K."/>
        </authorList>
    </citation>
    <scope>FUNCTION</scope>
</reference>
<reference key="11">
    <citation type="journal article" date="2008" name="Biochemistry">
        <title>Catalytic mechanism and substrate specificity of the beta-subunit of the voltage-gated potassium channel.</title>
        <authorList>
            <person name="Tipparaju S.M."/>
            <person name="Barski O.A."/>
            <person name="Srivastava S."/>
            <person name="Bhatnagar A."/>
        </authorList>
    </citation>
    <scope>FUNCTION</scope>
    <scope>CATALYTIC ACTIVITY</scope>
    <scope>BIOPHYSICOCHEMICAL PROPERTIES</scope>
    <scope>MUTAGENESIS OF TYR-90</scope>
    <scope>ACTIVE SITE</scope>
</reference>
<reference key="12">
    <citation type="journal article" date="2008" name="J. Biol. Chem.">
        <title>Homeostatic regulation of Kv1.2 potassium channel trafficking by cyclic AMP.</title>
        <authorList>
            <person name="Connors E.C."/>
            <person name="Ballif B.A."/>
            <person name="Morielli A.D."/>
        </authorList>
    </citation>
    <scope>FUNCTION</scope>
    <scope>INTERACTION WITH KCNA2</scope>
    <scope>SUBUNIT</scope>
</reference>
<reference key="13">
    <citation type="journal article" date="2011" name="J. Cell Biol.">
        <title>Cdk-mediated phosphorylation of the Kvbeta2 auxiliary subunit regulates Kv1 channel axonal targeting.</title>
        <authorList>
            <person name="Vacher H."/>
            <person name="Yang J.W."/>
            <person name="Cerda O."/>
            <person name="Autillo-Touati A."/>
            <person name="Dargent B."/>
            <person name="Trimmer J.S."/>
        </authorList>
    </citation>
    <scope>FUNCTION</scope>
    <scope>SUBCELLULAR LOCATION</scope>
    <scope>INTERACTION WITH KCNA2 AND MAPRE1</scope>
    <scope>TISSUE SPECIFICITY</scope>
    <scope>IDENTIFICATION BY MASS SPECTROMETRY</scope>
    <scope>PHOSPHORYLATION AT SER-9; SER-20 AND SER-112</scope>
    <scope>MUTAGENESIS OF SER-9; SER-20 AND SER-31</scope>
</reference>
<reference key="14">
    <citation type="journal article" date="2011" name="J. Neurosci.">
        <title>Deletion of the mouse homolog of KCNAB2, a gene linked to monosomy 1p36, results in associative memory impairments and amygdala hyperexcitability.</title>
        <authorList>
            <person name="Perkowski J.J."/>
            <person name="Murphy G.G."/>
        </authorList>
    </citation>
    <scope>FUNCTION</scope>
    <scope>MUTAGENESIS OF TYR-90</scope>
</reference>
<reference key="15">
    <citation type="journal article" date="2012" name="Nat. Commun.">
        <title>Quantitative maps of protein phosphorylation sites across 14 different rat organs and tissues.</title>
        <authorList>
            <person name="Lundby A."/>
            <person name="Secher A."/>
            <person name="Lage K."/>
            <person name="Nordsborg N.B."/>
            <person name="Dmytriyev A."/>
            <person name="Lundby C."/>
            <person name="Olsen J.V."/>
        </authorList>
    </citation>
    <scope>PHOSPHORYLATION [LARGE SCALE ANALYSIS] AT SER-9 AND SER-20</scope>
    <scope>IDENTIFICATION BY MASS SPECTROMETRY [LARGE SCALE ANALYSIS]</scope>
</reference>
<reference key="16">
    <citation type="journal article" date="2013" name="J. Physiol. (Lond.)">
        <title>A defined heteromeric KV1 channel stabilizes the intrinsic pacemaking and regulates the output of deep cerebellar nuclear neurons to thalamic targets.</title>
        <authorList>
            <person name="Ovsepian S.V."/>
            <person name="Steuber V."/>
            <person name="Le Berre M."/>
            <person name="O'Hara L."/>
            <person name="O'Leary V.B."/>
            <person name="Dolly J.O."/>
        </authorList>
    </citation>
    <scope>SUBCELLULAR LOCATION</scope>
    <scope>SUBUNIT</scope>
    <scope>INTERACTION WITH KCNA1 AND KCNA2</scope>
    <scope>TISSUE SPECIFICITY</scope>
</reference>
<reference evidence="26" key="17">
    <citation type="journal article" date="1999" name="Cell">
        <title>Structure of a voltage-dependent K+ channel beta subunit.</title>
        <authorList>
            <person name="Gulbis J.M."/>
            <person name="Mann S."/>
            <person name="MacKinnon R."/>
        </authorList>
    </citation>
    <scope>X-RAY CRYSTALLOGRAPHY (2.80 ANGSTROMS) OF 36-360 IN COMPLEX WITH NADP</scope>
    <scope>SUBUNIT</scope>
</reference>
<reference evidence="25" key="18">
    <citation type="journal article" date="2000" name="Science">
        <title>Structure of the cytoplasmic beta subunit-T1 assembly of voltage-dependent K+ channels.</title>
        <authorList>
            <person name="Gulbis J.M."/>
            <person name="Zhou M."/>
            <person name="Mann S."/>
            <person name="MacKinnon R."/>
        </authorList>
    </citation>
    <scope>X-RAY CRYSTALLOGRAPHY (2.1 ANGSTROMS) OF 36-367 IN COMPLEX WITH NADP</scope>
    <scope>INTERACTION WITH KCNA1</scope>
    <scope>SUBUNIT</scope>
</reference>
<reference evidence="27" key="19">
    <citation type="journal article" date="2005" name="Science">
        <title>Crystal structure of a mammalian voltage-dependent Shaker family K+ channel.</title>
        <authorList>
            <person name="Long S.B."/>
            <person name="Campbell E.B."/>
            <person name="Mackinnon R."/>
        </authorList>
    </citation>
    <scope>X-RAY CRYSTALLOGRAPHY (2.9 ANGSTROMS) OF 36-367 IN COMPLEX WITH NADP AND KCNA2</scope>
    <scope>SUBUNIT</scope>
</reference>
<reference evidence="28" key="20">
    <citation type="journal article" date="2007" name="Nature">
        <title>Atomic structure of a voltage-dependent K+ channel in a lipid membrane-like environment.</title>
        <authorList>
            <person name="Long S.B."/>
            <person name="Tao X."/>
            <person name="Campbell E.B."/>
            <person name="MacKinnon R."/>
        </authorList>
    </citation>
    <scope>X-RAY CRYSTALLOGRAPHY (2.40 ANGSTROMS) OF 36-367 IN COMPLEX WITH NADP AND KCNA2</scope>
    <scope>SUBUNIT</scope>
</reference>
<reference evidence="29 30 31" key="21">
    <citation type="journal article" date="2008" name="Nat. Chem. Biol.">
        <title>Cortisone dissociates the Shaker family K+ channels from their beta subunits.</title>
        <authorList>
            <person name="Pan Y."/>
            <person name="Weng J."/>
            <person name="Kabaleeswaran V."/>
            <person name="Li H."/>
            <person name="Cao Y."/>
            <person name="Bhosle R.C."/>
            <person name="Zhou M."/>
        </authorList>
    </citation>
    <scope>X-RAY CRYSTALLOGRAPHY (1.82 ANGSTROMS) OF 36-361 IN COMPLEX WITH KCNA2; CORTISONE AND NADP</scope>
    <scope>SUBUNIT</scope>
</reference>
<reference evidence="33" key="22">
    <citation type="journal article" date="2010" name="Proc. Natl. Acad. Sci. U.S.A.">
        <title>Structure of the full-length Shaker potassium channel Kv1.2 by normal-mode-based X-ray crystallographic refinement.</title>
        <authorList>
            <person name="Chen X."/>
            <person name="Wang Q."/>
            <person name="Ni F."/>
            <person name="Ma J."/>
        </authorList>
    </citation>
    <scope>X-RAY CRYSTALLOGRAPHY (2.90 ANGSTROMS) IN COMPLEX WITH KCNA2 AND NADP</scope>
    <scope>SUBUNIT</scope>
</reference>
<reference evidence="32" key="23">
    <citation type="journal article" date="2010" name="Science">
        <title>A gating charge transfer center in voltage sensors.</title>
        <authorList>
            <person name="Tao X."/>
            <person name="Lee A."/>
            <person name="Limapichat W."/>
            <person name="Dougherty D.A."/>
            <person name="MacKinnon R."/>
        </authorList>
    </citation>
    <scope>X-RAY CRYSTALLOGRAPHY (2.90 ANGSTROMS) OF 36-367 IN COMPLEX WITH KCNA2 AND NADP</scope>
    <scope>SUBUNIT</scope>
</reference>
<reference evidence="34 35 36" key="24">
    <citation type="journal article" date="2013" name="Elife">
        <title>Structure of a pore-blocking toxin in complex with a eukaryotic voltage-dependent K(+) channel.</title>
        <authorList>
            <person name="Banerjee A."/>
            <person name="Lee A."/>
            <person name="Campbell E."/>
            <person name="Mackinnon R."/>
        </authorList>
    </citation>
    <scope>X-RAY CRYSTALLOGRAPHY (2.50 ANGSTROMS) OF 36-367 IN COMPLEX WITH KCNA2 AND NADP</scope>
    <scope>SUBUNIT</scope>
</reference>
<feature type="chain" id="PRO_0000148748" description="Voltage-gated potassium channel subunit beta-2">
    <location>
        <begin position="1"/>
        <end position="367"/>
    </location>
</feature>
<feature type="active site" description="Proton donor/acceptor" evidence="23">
    <location>
        <position position="90"/>
    </location>
</feature>
<feature type="binding site" evidence="3 5 9 11 13 14 15 19 25 26 27 28 29 30 31 32 33 34 35 36">
    <location>
        <position position="56"/>
    </location>
    <ligand>
        <name>NADP(+)</name>
        <dbReference type="ChEBI" id="CHEBI:58349"/>
    </ligand>
</feature>
<feature type="binding site" evidence="3 5 9 11 13 14 15 19 25 26 27 28 29 30 31 32 33 34 35 36">
    <location>
        <position position="57"/>
    </location>
    <ligand>
        <name>NADP(+)</name>
        <dbReference type="ChEBI" id="CHEBI:58349"/>
    </ligand>
</feature>
<feature type="binding site" evidence="3 5 9 11 13 14 15 19 25 26 27 28 29 30 31 32 33 34 35 36">
    <location>
        <position position="63"/>
    </location>
    <ligand>
        <name>NADP(+)</name>
        <dbReference type="ChEBI" id="CHEBI:58349"/>
    </ligand>
</feature>
<feature type="binding site" evidence="3 5 9 11 13 14 15 19 25 26 27 28 29 30 31 32 33 34 35 36">
    <location>
        <position position="85"/>
    </location>
    <ligand>
        <name>NADP(+)</name>
        <dbReference type="ChEBI" id="CHEBI:58349"/>
    </ligand>
</feature>
<feature type="binding site" evidence="11 14 19 28 32 34">
    <location>
        <position position="158"/>
    </location>
    <ligand>
        <name>NADP(+)</name>
        <dbReference type="ChEBI" id="CHEBI:58349"/>
    </ligand>
</feature>
<feature type="binding site" evidence="3 5 9 11 13 14 15 19 25 26 27 28 29 30 31 32 33 34 35 36">
    <location>
        <position position="188"/>
    </location>
    <ligand>
        <name>NADP(+)</name>
        <dbReference type="ChEBI" id="CHEBI:58349"/>
    </ligand>
</feature>
<feature type="binding site" evidence="3 5 9 11 13 14 15 19 25 26 27 28 30 32 33 34 35 36">
    <location>
        <position position="189"/>
    </location>
    <ligand>
        <name>NADP(+)</name>
        <dbReference type="ChEBI" id="CHEBI:58349"/>
    </ligand>
</feature>
<feature type="binding site" evidence="3 5 9 11 13 14 15 19 25 26 27 28 29 30 31 32 33 34 35 36">
    <location>
        <position position="214"/>
    </location>
    <ligand>
        <name>NADP(+)</name>
        <dbReference type="ChEBI" id="CHEBI:58349"/>
    </ligand>
</feature>
<feature type="binding site" evidence="3 5 9 11 13 14 15 19 25 26 27 28 29 30 31 32 33 34 35 36">
    <location>
        <position position="243"/>
    </location>
    <ligand>
        <name>NADP(+)</name>
        <dbReference type="ChEBI" id="CHEBI:58349"/>
    </ligand>
</feature>
<feature type="binding site" evidence="3 5 9 11 13 14 15 19 25 26 27 28 29 30 31 32 33 34 35 36">
    <location>
        <position position="244"/>
    </location>
    <ligand>
        <name>NADP(+)</name>
        <dbReference type="ChEBI" id="CHEBI:58349"/>
    </ligand>
</feature>
<feature type="binding site" evidence="3 5 9 11 13 14 15 19 25 26 28 29 30 31 32 33 34 35 36">
    <location>
        <position position="245"/>
    </location>
    <ligand>
        <name>NADP(+)</name>
        <dbReference type="ChEBI" id="CHEBI:58349"/>
    </ligand>
</feature>
<feature type="binding site" evidence="3 5 9 11 13 14 15 19 25 26 27 28 29 30 31 32 33 34 35 36">
    <location>
        <position position="246"/>
    </location>
    <ligand>
        <name>NADP(+)</name>
        <dbReference type="ChEBI" id="CHEBI:58349"/>
    </ligand>
</feature>
<feature type="binding site" evidence="3 5 11 13 14 19 25 26 28 29 30 31 32 34">
    <location>
        <position position="247"/>
    </location>
    <ligand>
        <name>NADP(+)</name>
        <dbReference type="ChEBI" id="CHEBI:58349"/>
    </ligand>
</feature>
<feature type="binding site" evidence="3 5 9 11 13 14 15 19 25 26 27 28 29 30 31 32 33 34 36">
    <location>
        <position position="248"/>
    </location>
    <ligand>
        <name>NADP(+)</name>
        <dbReference type="ChEBI" id="CHEBI:58349"/>
    </ligand>
</feature>
<feature type="binding site" evidence="3 5 9 11 13 14 15 19 25 26 27 28 29 30 31 32 33 34 35 36">
    <location>
        <position position="254"/>
    </location>
    <ligand>
        <name>NADP(+)</name>
        <dbReference type="ChEBI" id="CHEBI:58349"/>
    </ligand>
</feature>
<feature type="binding site" evidence="3 19 26 35 36">
    <location>
        <position position="262"/>
    </location>
    <ligand>
        <name>NADP(+)</name>
        <dbReference type="ChEBI" id="CHEBI:58349"/>
    </ligand>
</feature>
<feature type="binding site" evidence="3 5 9 11 13 14 15 19 25 26 27 28 29 30 31 32 33 34 35 36">
    <location>
        <position position="264"/>
    </location>
    <ligand>
        <name>NADP(+)</name>
        <dbReference type="ChEBI" id="CHEBI:58349"/>
    </ligand>
</feature>
<feature type="binding site" evidence="19 35 36">
    <location>
        <position position="323"/>
    </location>
    <ligand>
        <name>NADP(+)</name>
        <dbReference type="ChEBI" id="CHEBI:58349"/>
    </ligand>
</feature>
<feature type="binding site" evidence="3 5 9 11 13 14 15 19 25 26 27 28 29 30 31 32 33 34 35 36">
    <location>
        <position position="325"/>
    </location>
    <ligand>
        <name>NADP(+)</name>
        <dbReference type="ChEBI" id="CHEBI:58349"/>
    </ligand>
</feature>
<feature type="binding site" evidence="3 5 9 11 13 14 15 19 25 26 27 28 29 30 31 32 33 34 35 36">
    <location>
        <position position="329"/>
    </location>
    <ligand>
        <name>NADP(+)</name>
        <dbReference type="ChEBI" id="CHEBI:58349"/>
    </ligand>
</feature>
<feature type="binding site" evidence="3 5 9 11 14 15 19 25 26 27 28 32 33 34 35 36">
    <location>
        <position position="332"/>
    </location>
    <ligand>
        <name>NADP(+)</name>
        <dbReference type="ChEBI" id="CHEBI:58349"/>
    </ligand>
</feature>
<feature type="binding site" evidence="3 5 9 11 13 14 15 19 25 26 27 28 29 30 31 32 33 34 35 36">
    <location>
        <position position="333"/>
    </location>
    <ligand>
        <name>NADP(+)</name>
        <dbReference type="ChEBI" id="CHEBI:58349"/>
    </ligand>
</feature>
<feature type="modified residue" description="Phosphoserine" evidence="17 37">
    <location>
        <position position="9"/>
    </location>
</feature>
<feature type="modified residue" description="Phosphoserine" evidence="2">
    <location>
        <position position="14"/>
    </location>
</feature>
<feature type="modified residue" description="Phosphoserine" evidence="17 37">
    <location>
        <position position="20"/>
    </location>
</feature>
<feature type="modified residue" description="Asymmetric dimethylarginine; alternate" evidence="2">
    <location>
        <position position="28"/>
    </location>
</feature>
<feature type="modified residue" description="Omega-N-methylarginine; alternate" evidence="1">
    <location>
        <position position="28"/>
    </location>
</feature>
<feature type="modified residue" description="Phosphoserine" evidence="2">
    <location>
        <position position="31"/>
    </location>
</feature>
<feature type="modified residue" description="Phosphoserine" evidence="17">
    <location>
        <position position="112"/>
    </location>
</feature>
<feature type="modified residue" description="N6-acetyllysine" evidence="2">
    <location>
        <position position="124"/>
    </location>
</feature>
<feature type="mutagenesis site" description="Impairs interaction with MAPRE1 and association with microtubules." evidence="17">
    <original>S</original>
    <variation>A</variation>
    <location>
        <position position="9"/>
    </location>
</feature>
<feature type="mutagenesis site" description="No effect on interaction with MAPRE1 and association with microtubules." evidence="17">
    <original>S</original>
    <variation>A</variation>
    <location>
        <position position="20"/>
    </location>
</feature>
<feature type="mutagenesis site" description="Impairs interaction with MAPRE1 and association with microtubules." evidence="17">
    <original>S</original>
    <variation>A</variation>
    <location>
        <position position="31"/>
    </location>
</feature>
<feature type="mutagenesis site" description="Abolishes enzyme activity, but has no effect on NADPH binding." evidence="12 16">
    <original>Y</original>
    <variation>F</variation>
    <location>
        <position position="90"/>
    </location>
</feature>
<feature type="strand" evidence="38">
    <location>
        <begin position="38"/>
        <end position="42"/>
    </location>
</feature>
<feature type="strand" evidence="38">
    <location>
        <begin position="48"/>
        <end position="55"/>
    </location>
</feature>
<feature type="helix" evidence="38">
    <location>
        <begin position="59"/>
        <end position="63"/>
    </location>
</feature>
<feature type="helix" evidence="38">
    <location>
        <begin position="66"/>
        <end position="78"/>
    </location>
</feature>
<feature type="strand" evidence="38">
    <location>
        <begin position="83"/>
        <end position="87"/>
    </location>
</feature>
<feature type="helix" evidence="38">
    <location>
        <begin position="90"/>
        <end position="93"/>
    </location>
</feature>
<feature type="helix" evidence="38">
    <location>
        <begin position="94"/>
        <end position="106"/>
    </location>
</feature>
<feature type="helix" evidence="38">
    <location>
        <begin position="110"/>
        <end position="112"/>
    </location>
</feature>
<feature type="strand" evidence="38">
    <location>
        <begin position="114"/>
        <end position="121"/>
    </location>
</feature>
<feature type="helix" evidence="38">
    <location>
        <begin position="126"/>
        <end position="128"/>
    </location>
</feature>
<feature type="strand" evidence="38">
    <location>
        <begin position="129"/>
        <end position="132"/>
    </location>
</feature>
<feature type="helix" evidence="38">
    <location>
        <begin position="133"/>
        <end position="147"/>
    </location>
</feature>
<feature type="strand" evidence="38">
    <location>
        <begin position="152"/>
        <end position="159"/>
    </location>
</feature>
<feature type="helix" evidence="38">
    <location>
        <begin position="166"/>
        <end position="178"/>
    </location>
</feature>
<feature type="strand" evidence="38">
    <location>
        <begin position="181"/>
        <end position="189"/>
    </location>
</feature>
<feature type="helix" evidence="38">
    <location>
        <begin position="192"/>
        <end position="204"/>
    </location>
</feature>
<feature type="strand" evidence="38">
    <location>
        <begin position="212"/>
        <end position="216"/>
    </location>
</feature>
<feature type="helix" evidence="38">
    <location>
        <begin position="223"/>
        <end position="236"/>
    </location>
</feature>
<feature type="strand" evidence="38">
    <location>
        <begin position="239"/>
        <end position="243"/>
    </location>
</feature>
<feature type="helix" evidence="38">
    <location>
        <begin position="247"/>
        <end position="252"/>
    </location>
</feature>
<feature type="turn" evidence="38">
    <location>
        <begin position="253"/>
        <end position="257"/>
    </location>
</feature>
<feature type="helix" evidence="38">
    <location>
        <begin position="264"/>
        <end position="266"/>
    </location>
</feature>
<feature type="helix" evidence="38">
    <location>
        <begin position="271"/>
        <end position="278"/>
    </location>
</feature>
<feature type="helix" evidence="38">
    <location>
        <begin position="280"/>
        <end position="299"/>
    </location>
</feature>
<feature type="helix" evidence="38">
    <location>
        <begin position="303"/>
        <end position="312"/>
    </location>
</feature>
<feature type="strand" evidence="38">
    <location>
        <begin position="319"/>
        <end position="322"/>
    </location>
</feature>
<feature type="helix" evidence="38">
    <location>
        <begin position="327"/>
        <end position="334"/>
    </location>
</feature>
<feature type="helix" evidence="38">
    <location>
        <begin position="335"/>
        <end position="342"/>
    </location>
</feature>
<feature type="helix" evidence="38">
    <location>
        <begin position="345"/>
        <end position="355"/>
    </location>
</feature>
<organism>
    <name type="scientific">Rattus norvegicus</name>
    <name type="common">Rat</name>
    <dbReference type="NCBI Taxonomy" id="10116"/>
    <lineage>
        <taxon>Eukaryota</taxon>
        <taxon>Metazoa</taxon>
        <taxon>Chordata</taxon>
        <taxon>Craniata</taxon>
        <taxon>Vertebrata</taxon>
        <taxon>Euteleostomi</taxon>
        <taxon>Mammalia</taxon>
        <taxon>Eutheria</taxon>
        <taxon>Euarchontoglires</taxon>
        <taxon>Glires</taxon>
        <taxon>Rodentia</taxon>
        <taxon>Myomorpha</taxon>
        <taxon>Muroidea</taxon>
        <taxon>Muridae</taxon>
        <taxon>Murinae</taxon>
        <taxon>Rattus</taxon>
    </lineage>
</organism>
<protein>
    <recommendedName>
        <fullName>Voltage-gated potassium channel subunit beta-2</fullName>
        <ecNumber evidence="12 16">1.1.1.-</ecNumber>
    </recommendedName>
    <alternativeName>
        <fullName>K(+) channel subunit beta-2</fullName>
    </alternativeName>
    <alternativeName>
        <fullName>Kv-beta-2</fullName>
    </alternativeName>
</protein>
<name>KCAB2_RAT</name>
<accession>P62483</accession>
<accession>P97381</accession>
<accession>Q60942</accession>
<accession>Q64284</accession>
<gene>
    <name evidence="24" type="primary">Kcnab2</name>
    <name type="synonym">Ckbeta2</name>
    <name type="synonym">Kcnb3</name>
</gene>